<keyword id="KW-1003">Cell membrane</keyword>
<keyword id="KW-1015">Disulfide bond</keyword>
<keyword id="KW-0325">Glycoprotein</keyword>
<keyword id="KW-0336">GPI-anchor</keyword>
<keyword id="KW-0349">Heme</keyword>
<keyword id="KW-1032">Host cell membrane</keyword>
<keyword id="KW-1043">Host membrane</keyword>
<keyword id="KW-1048">Host nucleus</keyword>
<keyword id="KW-0408">Iron</keyword>
<keyword id="KW-0449">Lipoprotein</keyword>
<keyword id="KW-0472">Membrane</keyword>
<keyword id="KW-0479">Metal-binding</keyword>
<keyword id="KW-1185">Reference proteome</keyword>
<keyword id="KW-0964">Secreted</keyword>
<keyword id="KW-0732">Signal</keyword>
<keyword id="KW-0843">Virulence</keyword>
<organism evidence="10">
    <name type="scientific">Marssonina brunnea f. sp. multigermtubi (strain MB_m1)</name>
    <name type="common">Marssonina leaf spot fungus</name>
    <dbReference type="NCBI Taxonomy" id="1072389"/>
    <lineage>
        <taxon>Eukaryota</taxon>
        <taxon>Fungi</taxon>
        <taxon>Dikarya</taxon>
        <taxon>Ascomycota</taxon>
        <taxon>Pezizomycotina</taxon>
        <taxon>Leotiomycetes</taxon>
        <taxon>Helotiales</taxon>
        <taxon>Drepanopezizaceae</taxon>
        <taxon>Drepanopeziza</taxon>
    </lineage>
</organism>
<feature type="signal peptide" evidence="2">
    <location>
        <begin position="1"/>
        <end position="18"/>
    </location>
</feature>
<feature type="chain" id="PRO_5003855334" description="Secreted effector CFEM9" evidence="2">
    <location>
        <begin position="19"/>
        <end position="215"/>
    </location>
</feature>
<feature type="propeptide" id="PRO_0000457869" description="Removed in mature form" evidence="2">
    <location>
        <begin position="216"/>
        <end position="239"/>
    </location>
</feature>
<feature type="domain" description="CFEM" evidence="4">
    <location>
        <begin position="19"/>
        <end position="125"/>
    </location>
</feature>
<feature type="region of interest" description="Disordered" evidence="5">
    <location>
        <begin position="187"/>
        <end position="216"/>
    </location>
</feature>
<feature type="compositionally biased region" description="Polar residues" evidence="5">
    <location>
        <begin position="187"/>
        <end position="199"/>
    </location>
</feature>
<feature type="binding site" description="axial binding residue" evidence="4">
    <location>
        <position position="60"/>
    </location>
    <ligand>
        <name>heme</name>
        <dbReference type="ChEBI" id="CHEBI:30413"/>
    </ligand>
    <ligandPart>
        <name>Fe</name>
        <dbReference type="ChEBI" id="CHEBI:18248"/>
    </ligandPart>
</feature>
<feature type="lipid moiety-binding region" description="GPI-anchor amidated glycine" evidence="2">
    <location>
        <position position="215"/>
    </location>
</feature>
<feature type="glycosylation site" description="N-linked (GlcNAc...) asparagine" evidence="3">
    <location>
        <position position="216"/>
    </location>
</feature>
<feature type="disulfide bond" evidence="4">
    <location>
        <begin position="43"/>
        <end position="82"/>
    </location>
</feature>
<feature type="disulfide bond" evidence="4">
    <location>
        <begin position="47"/>
        <end position="77"/>
    </location>
</feature>
<feature type="disulfide bond" evidence="4">
    <location>
        <begin position="57"/>
        <end position="63"/>
    </location>
</feature>
<feature type="disulfide bond" evidence="4">
    <location>
        <begin position="65"/>
        <end position="98"/>
    </location>
</feature>
<feature type="sequence conflict" description="In Ref. 1; no nucleotide entry." evidence="8" ref="1">
    <location>
        <begin position="25"/>
        <end position="40"/>
    </location>
</feature>
<comment type="function">
    <text evidence="6">Appears to function during host infection, and may play a role in suppressing the host immune response.</text>
</comment>
<comment type="subcellular location">
    <subcellularLocation>
        <location evidence="2">Cell membrane</location>
        <topology evidence="2">Lipid-anchor</topology>
        <topology evidence="2">GPI-anchor</topology>
    </subcellularLocation>
    <subcellularLocation>
        <location evidence="6">Secreted</location>
    </subcellularLocation>
    <subcellularLocation>
        <location evidence="6">Host nucleus</location>
    </subcellularLocation>
    <subcellularLocation>
        <location evidence="6">Host cell membrane</location>
    </subcellularLocation>
</comment>
<comment type="induction">
    <text evidence="6">Induced during infection of poplar leaves, with highest expression observed four days post inoculation.</text>
</comment>
<comment type="domain">
    <text evidence="1">The CFEM domain is involved in heme-binding and contains 8 cysteines and is found in proteins from several pathogenic fungi, including both human and plant pathogens (By similarity). The CFEM domain adopts a novel helical-basket fold that consists of six alpha-helices, and is uniquely stabilized by four disulfide bonds formed by its 8 signature cysteines (By similarity).</text>
</comment>
<comment type="similarity">
    <text evidence="8">Belongs to the RBT5 family.</text>
</comment>
<reference evidence="8" key="1">
    <citation type="journal article" date="2022" name="Front. Cell. Infect. Microbiol.">
        <title>Systematic identification and functional characterization of the CFEM proteins in poplar fungus Marssonina brunnea.</title>
        <authorList>
            <person name="Qian Y."/>
            <person name="Zheng X."/>
            <person name="Wang X."/>
            <person name="Yang J."/>
            <person name="Zheng X."/>
            <person name="Zeng Q."/>
            <person name="Li J."/>
            <person name="Zhuge Q."/>
            <person name="Xiong Q."/>
        </authorList>
    </citation>
    <scope>NUCLEOTIDE SEQUENCE [MRNA]</scope>
    <scope>FUNCTION</scope>
    <scope>SUBCELLULAR LOCATION</scope>
    <scope>INDUCTION</scope>
    <source>
        <strain evidence="7">J4</strain>
    </source>
</reference>
<reference evidence="10" key="2">
    <citation type="journal article" date="2012" name="BMC Genomics">
        <title>Sequencing the genome of Marssonina brunnea reveals fungus-poplar co-evolution.</title>
        <authorList>
            <person name="Zhu S."/>
            <person name="Cao Y.-Z."/>
            <person name="Jiang C."/>
            <person name="Tan B.-Y."/>
            <person name="Wang Z."/>
            <person name="Feng S."/>
            <person name="Zhang L."/>
            <person name="Su X.-H."/>
            <person name="Brejova B."/>
            <person name="Vinar T."/>
            <person name="Xu M."/>
            <person name="Wang M.-X."/>
            <person name="Zhang S.-G."/>
            <person name="Huang M.-R."/>
            <person name="Wu R."/>
            <person name="Zhou Y."/>
        </authorList>
    </citation>
    <scope>NUCLEOTIDE SEQUENCE [LARGE SCALE GENOMIC DNA]</scope>
    <source>
        <strain evidence="10">MB_m1</strain>
    </source>
</reference>
<protein>
    <recommendedName>
        <fullName evidence="7">Secreted effector CFEM9</fullName>
    </recommendedName>
    <alternativeName>
        <fullName evidence="7">MbCFEM9</fullName>
    </alternativeName>
</protein>
<accession>K1XT82</accession>
<gene>
    <name evidence="7" type="primary">CFEM9</name>
    <name evidence="9" type="ORF">MBM_06307</name>
</gene>
<name>CFM9_MARBU</name>
<proteinExistence type="evidence at transcript level"/>
<sequence>MRVLKFLSLMAMLGCTIGQSGSATPGSLHLLGGPTTTDWYPECALRCWENTKYVTKCSEDQQCLCSDVNYQNSVFQCIYSQCDTVHFGSALHHAIAQCLGTDNEVFFAIPPIPDRDALRRREDEYAAGAKLFGSGSAAGYPTESAAFPVQSANYPTDSVGGPYSPSPTASVPFPYFSLTSVTSPAAKSATTTEATRNTVPASTTAPSPSPQLYTGNASTSRATVSLTVVLTVAAVYLVL</sequence>
<evidence type="ECO:0000250" key="1">
    <source>
        <dbReference type="UniProtKB" id="Q5A0X8"/>
    </source>
</evidence>
<evidence type="ECO:0000255" key="2"/>
<evidence type="ECO:0000255" key="3">
    <source>
        <dbReference type="PROSITE-ProRule" id="PRU00498"/>
    </source>
</evidence>
<evidence type="ECO:0000255" key="4">
    <source>
        <dbReference type="PROSITE-ProRule" id="PRU01356"/>
    </source>
</evidence>
<evidence type="ECO:0000256" key="5">
    <source>
        <dbReference type="SAM" id="MobiDB-lite"/>
    </source>
</evidence>
<evidence type="ECO:0000269" key="6">
    <source>
    </source>
</evidence>
<evidence type="ECO:0000303" key="7">
    <source>
    </source>
</evidence>
<evidence type="ECO:0000305" key="8"/>
<evidence type="ECO:0000312" key="9">
    <source>
        <dbReference type="EMBL" id="EKD15679.1"/>
    </source>
</evidence>
<evidence type="ECO:0000312" key="10">
    <source>
        <dbReference type="Proteomes" id="UP000006753"/>
    </source>
</evidence>
<dbReference type="EMBL" id="JH921441">
    <property type="protein sequence ID" value="EKD15679.1"/>
    <property type="molecule type" value="Genomic_DNA"/>
</dbReference>
<dbReference type="RefSeq" id="XP_007294196.1">
    <property type="nucleotide sequence ID" value="XM_007294134.1"/>
</dbReference>
<dbReference type="SMR" id="K1XT82"/>
<dbReference type="KEGG" id="mbe:MBM_06307"/>
<dbReference type="eggNOG" id="ENOG502TEWM">
    <property type="taxonomic scope" value="Eukaryota"/>
</dbReference>
<dbReference type="HOGENOM" id="CLU_110310_0_0_1"/>
<dbReference type="InParanoid" id="K1XT82"/>
<dbReference type="OrthoDB" id="5421216at2759"/>
<dbReference type="Proteomes" id="UP000006753">
    <property type="component" value="Unassembled WGS sequence"/>
</dbReference>
<dbReference type="GO" id="GO:0005615">
    <property type="term" value="C:extracellular space"/>
    <property type="evidence" value="ECO:0000314"/>
    <property type="project" value="UniProtKB"/>
</dbReference>
<dbReference type="GO" id="GO:0042025">
    <property type="term" value="C:host cell nucleus"/>
    <property type="evidence" value="ECO:0000314"/>
    <property type="project" value="UniProtKB"/>
</dbReference>
<dbReference type="GO" id="GO:0020002">
    <property type="term" value="C:host cell plasma membrane"/>
    <property type="evidence" value="ECO:0000314"/>
    <property type="project" value="UniProtKB"/>
</dbReference>
<dbReference type="GO" id="GO:0005886">
    <property type="term" value="C:plasma membrane"/>
    <property type="evidence" value="ECO:0007669"/>
    <property type="project" value="UniProtKB-SubCell"/>
</dbReference>
<dbReference type="GO" id="GO:0098552">
    <property type="term" value="C:side of membrane"/>
    <property type="evidence" value="ECO:0007669"/>
    <property type="project" value="UniProtKB-KW"/>
</dbReference>
<dbReference type="GO" id="GO:0046872">
    <property type="term" value="F:metal ion binding"/>
    <property type="evidence" value="ECO:0007669"/>
    <property type="project" value="UniProtKB-KW"/>
</dbReference>
<dbReference type="GO" id="GO:0051701">
    <property type="term" value="P:biological process involved in interaction with host"/>
    <property type="evidence" value="ECO:0000314"/>
    <property type="project" value="UniProtKB"/>
</dbReference>
<dbReference type="InterPro" id="IPR008427">
    <property type="entry name" value="Extracellular_membr_CFEM_dom"/>
</dbReference>
<dbReference type="Pfam" id="PF05730">
    <property type="entry name" value="CFEM"/>
    <property type="match status" value="1"/>
</dbReference>